<protein>
    <recommendedName>
        <fullName evidence="1">Sec-independent protein translocase protein TatA</fullName>
    </recommendedName>
</protein>
<sequence>MGSFSIWHWLIVLVIVALIFGTKKLRNIGSDLGGAVKGFKDGMQEANADKTEQVTQQQTTIDVQAKEKQNS</sequence>
<comment type="function">
    <text evidence="1">Part of the twin-arginine translocation (Tat) system that transports large folded proteins containing a characteristic twin-arginine motif in their signal peptide across membranes. TatA could form the protein-conducting channel of the Tat system.</text>
</comment>
<comment type="subunit">
    <text evidence="1">The Tat system comprises two distinct complexes: a TatABC complex, containing multiple copies of TatA, TatB and TatC subunits, and a separate TatA complex, containing only TatA subunits. Substrates initially bind to the TatABC complex, which probably triggers association of the separate TatA complex to form the active translocon.</text>
</comment>
<comment type="subcellular location">
    <subcellularLocation>
        <location evidence="1">Cell inner membrane</location>
        <topology evidence="1">Single-pass membrane protein</topology>
    </subcellularLocation>
</comment>
<comment type="similarity">
    <text evidence="1">Belongs to the TatA/E family.</text>
</comment>
<gene>
    <name evidence="1" type="primary">tatA</name>
    <name type="ordered locus">BAV3323</name>
</gene>
<feature type="chain" id="PRO_1000044353" description="Sec-independent protein translocase protein TatA">
    <location>
        <begin position="1"/>
        <end position="71"/>
    </location>
</feature>
<feature type="transmembrane region" description="Helical" evidence="1">
    <location>
        <begin position="1"/>
        <end position="21"/>
    </location>
</feature>
<feature type="region of interest" description="Disordered" evidence="2">
    <location>
        <begin position="48"/>
        <end position="71"/>
    </location>
</feature>
<proteinExistence type="inferred from homology"/>
<reference key="1">
    <citation type="journal article" date="2006" name="J. Bacteriol.">
        <title>Comparison of the genome sequence of the poultry pathogen Bordetella avium with those of B. bronchiseptica, B. pertussis, and B. parapertussis reveals extensive diversity in surface structures associated with host interaction.</title>
        <authorList>
            <person name="Sebaihia M."/>
            <person name="Preston A."/>
            <person name="Maskell D.J."/>
            <person name="Kuzmiak H."/>
            <person name="Connell T.D."/>
            <person name="King N.D."/>
            <person name="Orndorff P.E."/>
            <person name="Miyamoto D.M."/>
            <person name="Thomson N.R."/>
            <person name="Harris D."/>
            <person name="Goble A."/>
            <person name="Lord A."/>
            <person name="Murphy L."/>
            <person name="Quail M.A."/>
            <person name="Rutter S."/>
            <person name="Squares R."/>
            <person name="Squares S."/>
            <person name="Woodward J."/>
            <person name="Parkhill J."/>
            <person name="Temple L.M."/>
        </authorList>
    </citation>
    <scope>NUCLEOTIDE SEQUENCE [LARGE SCALE GENOMIC DNA]</scope>
    <source>
        <strain>197N</strain>
    </source>
</reference>
<name>TATA_BORA1</name>
<keyword id="KW-0997">Cell inner membrane</keyword>
<keyword id="KW-1003">Cell membrane</keyword>
<keyword id="KW-0472">Membrane</keyword>
<keyword id="KW-0653">Protein transport</keyword>
<keyword id="KW-1185">Reference proteome</keyword>
<keyword id="KW-0811">Translocation</keyword>
<keyword id="KW-0812">Transmembrane</keyword>
<keyword id="KW-1133">Transmembrane helix</keyword>
<keyword id="KW-0813">Transport</keyword>
<organism>
    <name type="scientific">Bordetella avium (strain 197N)</name>
    <dbReference type="NCBI Taxonomy" id="360910"/>
    <lineage>
        <taxon>Bacteria</taxon>
        <taxon>Pseudomonadati</taxon>
        <taxon>Pseudomonadota</taxon>
        <taxon>Betaproteobacteria</taxon>
        <taxon>Burkholderiales</taxon>
        <taxon>Alcaligenaceae</taxon>
        <taxon>Bordetella</taxon>
    </lineage>
</organism>
<dbReference type="EMBL" id="AM167904">
    <property type="protein sequence ID" value="CAJ50933.1"/>
    <property type="molecule type" value="Genomic_DNA"/>
</dbReference>
<dbReference type="RefSeq" id="WP_012418960.1">
    <property type="nucleotide sequence ID" value="NC_010645.1"/>
</dbReference>
<dbReference type="SMR" id="Q2KTS7"/>
<dbReference type="STRING" id="360910.BAV3323"/>
<dbReference type="GeneID" id="92933418"/>
<dbReference type="KEGG" id="bav:BAV3323"/>
<dbReference type="eggNOG" id="COG1826">
    <property type="taxonomic scope" value="Bacteria"/>
</dbReference>
<dbReference type="HOGENOM" id="CLU_086034_5_3_4"/>
<dbReference type="OrthoDB" id="7066617at2"/>
<dbReference type="Proteomes" id="UP000001977">
    <property type="component" value="Chromosome"/>
</dbReference>
<dbReference type="GO" id="GO:0033281">
    <property type="term" value="C:TAT protein transport complex"/>
    <property type="evidence" value="ECO:0007669"/>
    <property type="project" value="UniProtKB-UniRule"/>
</dbReference>
<dbReference type="GO" id="GO:0008320">
    <property type="term" value="F:protein transmembrane transporter activity"/>
    <property type="evidence" value="ECO:0007669"/>
    <property type="project" value="UniProtKB-UniRule"/>
</dbReference>
<dbReference type="GO" id="GO:0043953">
    <property type="term" value="P:protein transport by the Tat complex"/>
    <property type="evidence" value="ECO:0007669"/>
    <property type="project" value="UniProtKB-UniRule"/>
</dbReference>
<dbReference type="Gene3D" id="1.20.5.3310">
    <property type="match status" value="1"/>
</dbReference>
<dbReference type="HAMAP" id="MF_00236">
    <property type="entry name" value="TatA_E"/>
    <property type="match status" value="1"/>
</dbReference>
<dbReference type="InterPro" id="IPR003369">
    <property type="entry name" value="TatA/B/E"/>
</dbReference>
<dbReference type="InterPro" id="IPR006312">
    <property type="entry name" value="TatA/E"/>
</dbReference>
<dbReference type="NCBIfam" id="NF002813">
    <property type="entry name" value="PRK02958.1"/>
    <property type="match status" value="1"/>
</dbReference>
<dbReference type="NCBIfam" id="TIGR01411">
    <property type="entry name" value="tatAE"/>
    <property type="match status" value="1"/>
</dbReference>
<dbReference type="PANTHER" id="PTHR42982">
    <property type="entry name" value="SEC-INDEPENDENT PROTEIN TRANSLOCASE PROTEIN TATA"/>
    <property type="match status" value="1"/>
</dbReference>
<dbReference type="PANTHER" id="PTHR42982:SF1">
    <property type="entry name" value="SEC-INDEPENDENT PROTEIN TRANSLOCASE PROTEIN TATA"/>
    <property type="match status" value="1"/>
</dbReference>
<dbReference type="Pfam" id="PF02416">
    <property type="entry name" value="TatA_B_E"/>
    <property type="match status" value="1"/>
</dbReference>
<evidence type="ECO:0000255" key="1">
    <source>
        <dbReference type="HAMAP-Rule" id="MF_00236"/>
    </source>
</evidence>
<evidence type="ECO:0000256" key="2">
    <source>
        <dbReference type="SAM" id="MobiDB-lite"/>
    </source>
</evidence>
<accession>Q2KTS7</accession>